<dbReference type="EC" id="7.5.2.7" evidence="1"/>
<dbReference type="EMBL" id="CP000431">
    <property type="protein sequence ID" value="ABG95882.1"/>
    <property type="molecule type" value="Genomic_DNA"/>
</dbReference>
<dbReference type="RefSeq" id="WP_011596581.1">
    <property type="nucleotide sequence ID" value="NC_008268.1"/>
</dbReference>
<dbReference type="SMR" id="Q0S9A4"/>
<dbReference type="KEGG" id="rha:RHA1_ro04085"/>
<dbReference type="PATRIC" id="fig|101510.16.peg.4115"/>
<dbReference type="eggNOG" id="COG1129">
    <property type="taxonomic scope" value="Bacteria"/>
</dbReference>
<dbReference type="HOGENOM" id="CLU_000604_92_3_11"/>
<dbReference type="OrthoDB" id="7757085at2"/>
<dbReference type="Proteomes" id="UP000008710">
    <property type="component" value="Chromosome"/>
</dbReference>
<dbReference type="GO" id="GO:0005886">
    <property type="term" value="C:plasma membrane"/>
    <property type="evidence" value="ECO:0007669"/>
    <property type="project" value="UniProtKB-SubCell"/>
</dbReference>
<dbReference type="GO" id="GO:0015611">
    <property type="term" value="F:ABC-type D-ribose transporter activity"/>
    <property type="evidence" value="ECO:0007669"/>
    <property type="project" value="UniProtKB-EC"/>
</dbReference>
<dbReference type="GO" id="GO:0005524">
    <property type="term" value="F:ATP binding"/>
    <property type="evidence" value="ECO:0007669"/>
    <property type="project" value="UniProtKB-KW"/>
</dbReference>
<dbReference type="GO" id="GO:0016887">
    <property type="term" value="F:ATP hydrolysis activity"/>
    <property type="evidence" value="ECO:0007669"/>
    <property type="project" value="InterPro"/>
</dbReference>
<dbReference type="CDD" id="cd03216">
    <property type="entry name" value="ABC_Carb_Monos_I"/>
    <property type="match status" value="1"/>
</dbReference>
<dbReference type="CDD" id="cd03215">
    <property type="entry name" value="ABC_Carb_Monos_II"/>
    <property type="match status" value="1"/>
</dbReference>
<dbReference type="FunFam" id="3.40.50.300:FF:000127">
    <property type="entry name" value="Ribose import ATP-binding protein RbsA"/>
    <property type="match status" value="1"/>
</dbReference>
<dbReference type="Gene3D" id="3.40.50.300">
    <property type="entry name" value="P-loop containing nucleotide triphosphate hydrolases"/>
    <property type="match status" value="2"/>
</dbReference>
<dbReference type="InterPro" id="IPR003593">
    <property type="entry name" value="AAA+_ATPase"/>
</dbReference>
<dbReference type="InterPro" id="IPR050107">
    <property type="entry name" value="ABC_carbohydrate_import_ATPase"/>
</dbReference>
<dbReference type="InterPro" id="IPR003439">
    <property type="entry name" value="ABC_transporter-like_ATP-bd"/>
</dbReference>
<dbReference type="InterPro" id="IPR017871">
    <property type="entry name" value="ABC_transporter-like_CS"/>
</dbReference>
<dbReference type="InterPro" id="IPR027417">
    <property type="entry name" value="P-loop_NTPase"/>
</dbReference>
<dbReference type="PANTHER" id="PTHR43790">
    <property type="entry name" value="CARBOHYDRATE TRANSPORT ATP-BINDING PROTEIN MG119-RELATED"/>
    <property type="match status" value="1"/>
</dbReference>
<dbReference type="PANTHER" id="PTHR43790:SF3">
    <property type="entry name" value="D-ALLOSE IMPORT ATP-BINDING PROTEIN ALSA-RELATED"/>
    <property type="match status" value="1"/>
</dbReference>
<dbReference type="Pfam" id="PF00005">
    <property type="entry name" value="ABC_tran"/>
    <property type="match status" value="2"/>
</dbReference>
<dbReference type="SMART" id="SM00382">
    <property type="entry name" value="AAA"/>
    <property type="match status" value="2"/>
</dbReference>
<dbReference type="SUPFAM" id="SSF52540">
    <property type="entry name" value="P-loop containing nucleoside triphosphate hydrolases"/>
    <property type="match status" value="2"/>
</dbReference>
<dbReference type="PROSITE" id="PS00211">
    <property type="entry name" value="ABC_TRANSPORTER_1"/>
    <property type="match status" value="1"/>
</dbReference>
<dbReference type="PROSITE" id="PS50893">
    <property type="entry name" value="ABC_TRANSPORTER_2"/>
    <property type="match status" value="2"/>
</dbReference>
<dbReference type="PROSITE" id="PS51254">
    <property type="entry name" value="RBSA"/>
    <property type="match status" value="1"/>
</dbReference>
<sequence length="503" mass="53472">MSVPPAVPLLEVRDVTKSFGNVAAVQGVSFPLYGGEAHALVGENGAGKSTIVKMLAGVHGPDTGSLLVGGEEVSLGSPSDAKARGIAVIYQEPTLFPDLTIAENIFIGTQPRARLGMIDRSAMNTAARALFDRLGVPMDPDRLASGLSIADQQLVEIAKALSTDANVIVMDEPTAALSGNEVERLFKVARSLCASGSAVMFISHRFEEIFALCQRVTVMRDGRHISTSELAGLTVDDLVRSMVGRDLGALFPKIDVEPGAVVLEIENLSRAGVFSDISFQVRAGEIVALSGLVGAGRSEVMQSAFGVDPRDSGDVRVRGKSLRKGSPKAAMRAGMALVPEDRRQQGLILDMSIERNATLTRSSALARFGFLFGGRERRSAYEWTKKLQTKYARITDPVGVLSGGNQQKVVLAKWMATAPSVLIVDEPTRGIDVGTKAEVHRIISTLASEGVAVVMISSELPEVLGMADRVLVMREGRIVSELSRSEADEEKIMFAATGSEAAA</sequence>
<gene>
    <name evidence="1" type="primary">rbsA</name>
    <name type="ordered locus">RHA1_ro04085</name>
</gene>
<evidence type="ECO:0000255" key="1">
    <source>
        <dbReference type="HAMAP-Rule" id="MF_01716"/>
    </source>
</evidence>
<feature type="chain" id="PRO_0000261092" description="Ribose import ATP-binding protein RbsA">
    <location>
        <begin position="1"/>
        <end position="503"/>
    </location>
</feature>
<feature type="domain" description="ABC transporter 1" evidence="1">
    <location>
        <begin position="10"/>
        <end position="246"/>
    </location>
</feature>
<feature type="domain" description="ABC transporter 2" evidence="1">
    <location>
        <begin position="256"/>
        <end position="500"/>
    </location>
</feature>
<feature type="binding site" evidence="1">
    <location>
        <begin position="42"/>
        <end position="49"/>
    </location>
    <ligand>
        <name>ATP</name>
        <dbReference type="ChEBI" id="CHEBI:30616"/>
    </ligand>
</feature>
<comment type="function">
    <text evidence="1">Part of the ABC transporter complex RbsABC involved in ribose import. Responsible for energy coupling to the transport system.</text>
</comment>
<comment type="catalytic activity">
    <reaction evidence="1">
        <text>D-ribose(out) + ATP + H2O = D-ribose(in) + ADP + phosphate + H(+)</text>
        <dbReference type="Rhea" id="RHEA:29903"/>
        <dbReference type="ChEBI" id="CHEBI:15377"/>
        <dbReference type="ChEBI" id="CHEBI:15378"/>
        <dbReference type="ChEBI" id="CHEBI:30616"/>
        <dbReference type="ChEBI" id="CHEBI:43474"/>
        <dbReference type="ChEBI" id="CHEBI:47013"/>
        <dbReference type="ChEBI" id="CHEBI:456216"/>
        <dbReference type="EC" id="7.5.2.7"/>
    </reaction>
</comment>
<comment type="subunit">
    <text evidence="1">The complex is composed of an ATP-binding protein (RbsA), two transmembrane proteins (RbsC) and a solute-binding protein (RbsB).</text>
</comment>
<comment type="subcellular location">
    <subcellularLocation>
        <location evidence="1">Cell membrane</location>
        <topology evidence="1">Peripheral membrane protein</topology>
    </subcellularLocation>
</comment>
<comment type="similarity">
    <text evidence="1">Belongs to the ABC transporter superfamily. Ribose importer (TC 3.A.1.2.1) family.</text>
</comment>
<keyword id="KW-0067">ATP-binding</keyword>
<keyword id="KW-1003">Cell membrane</keyword>
<keyword id="KW-0472">Membrane</keyword>
<keyword id="KW-0547">Nucleotide-binding</keyword>
<keyword id="KW-0677">Repeat</keyword>
<keyword id="KW-0762">Sugar transport</keyword>
<keyword id="KW-1278">Translocase</keyword>
<keyword id="KW-0813">Transport</keyword>
<organism>
    <name type="scientific">Rhodococcus jostii (strain RHA1)</name>
    <dbReference type="NCBI Taxonomy" id="101510"/>
    <lineage>
        <taxon>Bacteria</taxon>
        <taxon>Bacillati</taxon>
        <taxon>Actinomycetota</taxon>
        <taxon>Actinomycetes</taxon>
        <taxon>Mycobacteriales</taxon>
        <taxon>Nocardiaceae</taxon>
        <taxon>Rhodococcus</taxon>
    </lineage>
</organism>
<name>RBSA_RHOJR</name>
<reference key="1">
    <citation type="journal article" date="2006" name="Proc. Natl. Acad. Sci. U.S.A.">
        <title>The complete genome of Rhodococcus sp. RHA1 provides insights into a catabolic powerhouse.</title>
        <authorList>
            <person name="McLeod M.P."/>
            <person name="Warren R.L."/>
            <person name="Hsiao W.W.L."/>
            <person name="Araki N."/>
            <person name="Myhre M."/>
            <person name="Fernandes C."/>
            <person name="Miyazawa D."/>
            <person name="Wong W."/>
            <person name="Lillquist A.L."/>
            <person name="Wang D."/>
            <person name="Dosanjh M."/>
            <person name="Hara H."/>
            <person name="Petrescu A."/>
            <person name="Morin R.D."/>
            <person name="Yang G."/>
            <person name="Stott J.M."/>
            <person name="Schein J.E."/>
            <person name="Shin H."/>
            <person name="Smailus D."/>
            <person name="Siddiqui A.S."/>
            <person name="Marra M.A."/>
            <person name="Jones S.J.M."/>
            <person name="Holt R."/>
            <person name="Brinkman F.S.L."/>
            <person name="Miyauchi K."/>
            <person name="Fukuda M."/>
            <person name="Davies J.E."/>
            <person name="Mohn W.W."/>
            <person name="Eltis L.D."/>
        </authorList>
    </citation>
    <scope>NUCLEOTIDE SEQUENCE [LARGE SCALE GENOMIC DNA]</scope>
    <source>
        <strain>RHA1</strain>
    </source>
</reference>
<proteinExistence type="inferred from homology"/>
<protein>
    <recommendedName>
        <fullName evidence="1">Ribose import ATP-binding protein RbsA</fullName>
        <ecNumber evidence="1">7.5.2.7</ecNumber>
    </recommendedName>
</protein>
<accession>Q0S9A4</accession>